<feature type="chain" id="PRO_0000213246" description="Global transcriptional regulator CodY">
    <location>
        <begin position="1"/>
        <end position="260"/>
    </location>
</feature>
<feature type="DNA-binding region" description="H-T-H motif" evidence="1">
    <location>
        <begin position="207"/>
        <end position="226"/>
    </location>
</feature>
<feature type="region of interest" description="GAF domain" evidence="1">
    <location>
        <begin position="1"/>
        <end position="159"/>
    </location>
</feature>
<dbReference type="EMBL" id="CP000003">
    <property type="protein sequence ID" value="AAT87640.1"/>
    <property type="status" value="ALT_INIT"/>
    <property type="molecule type" value="Genomic_DNA"/>
</dbReference>
<dbReference type="RefSeq" id="WP_002983278.1">
    <property type="nucleotide sequence ID" value="NC_006086.1"/>
</dbReference>
<dbReference type="SMR" id="Q5XAC3"/>
<dbReference type="KEGG" id="spa:M6_Spy1505"/>
<dbReference type="HOGENOM" id="CLU_089581_0_0_9"/>
<dbReference type="Proteomes" id="UP000001167">
    <property type="component" value="Chromosome"/>
</dbReference>
<dbReference type="GO" id="GO:0005737">
    <property type="term" value="C:cytoplasm"/>
    <property type="evidence" value="ECO:0007669"/>
    <property type="project" value="UniProtKB-SubCell"/>
</dbReference>
<dbReference type="GO" id="GO:0003677">
    <property type="term" value="F:DNA binding"/>
    <property type="evidence" value="ECO:0007669"/>
    <property type="project" value="UniProtKB-UniRule"/>
</dbReference>
<dbReference type="GO" id="GO:0003700">
    <property type="term" value="F:DNA-binding transcription factor activity"/>
    <property type="evidence" value="ECO:0007669"/>
    <property type="project" value="InterPro"/>
</dbReference>
<dbReference type="GO" id="GO:0005525">
    <property type="term" value="F:GTP binding"/>
    <property type="evidence" value="ECO:0007669"/>
    <property type="project" value="InterPro"/>
</dbReference>
<dbReference type="GO" id="GO:0045892">
    <property type="term" value="P:negative regulation of DNA-templated transcription"/>
    <property type="evidence" value="ECO:0007669"/>
    <property type="project" value="UniProtKB-UniRule"/>
</dbReference>
<dbReference type="CDD" id="cd00090">
    <property type="entry name" value="HTH_ARSR"/>
    <property type="match status" value="1"/>
</dbReference>
<dbReference type="FunFam" id="1.10.10.10:FF:000034">
    <property type="entry name" value="GTP-sensing transcriptional pleiotropic repressor CodY"/>
    <property type="match status" value="1"/>
</dbReference>
<dbReference type="FunFam" id="3.30.450.40:FF:000003">
    <property type="entry name" value="GTP-sensing transcriptional pleiotropic repressor CodY"/>
    <property type="match status" value="1"/>
</dbReference>
<dbReference type="Gene3D" id="3.30.450.40">
    <property type="match status" value="1"/>
</dbReference>
<dbReference type="Gene3D" id="1.10.10.10">
    <property type="entry name" value="Winged helix-like DNA-binding domain superfamily/Winged helix DNA-binding domain"/>
    <property type="match status" value="1"/>
</dbReference>
<dbReference type="HAMAP" id="MF_00621">
    <property type="entry name" value="HTH_type_CodY"/>
    <property type="match status" value="1"/>
</dbReference>
<dbReference type="InterPro" id="IPR011991">
    <property type="entry name" value="ArsR-like_HTH"/>
</dbReference>
<dbReference type="InterPro" id="IPR014154">
    <property type="entry name" value="CodY"/>
</dbReference>
<dbReference type="InterPro" id="IPR029016">
    <property type="entry name" value="GAF-like_dom_sf"/>
</dbReference>
<dbReference type="InterPro" id="IPR013198">
    <property type="entry name" value="GTP_trans_reg_CodY_C"/>
</dbReference>
<dbReference type="InterPro" id="IPR010312">
    <property type="entry name" value="Transc_reg_CodY_N"/>
</dbReference>
<dbReference type="InterPro" id="IPR036388">
    <property type="entry name" value="WH-like_DNA-bd_sf"/>
</dbReference>
<dbReference type="InterPro" id="IPR036390">
    <property type="entry name" value="WH_DNA-bd_sf"/>
</dbReference>
<dbReference type="NCBIfam" id="TIGR02787">
    <property type="entry name" value="codY_Gpos"/>
    <property type="match status" value="1"/>
</dbReference>
<dbReference type="NCBIfam" id="NF003170">
    <property type="entry name" value="PRK04158.1"/>
    <property type="match status" value="1"/>
</dbReference>
<dbReference type="PANTHER" id="PTHR40062:SF1">
    <property type="entry name" value="GLOBAL TRANSCRIPTIONAL REGULATOR CODY"/>
    <property type="match status" value="1"/>
</dbReference>
<dbReference type="PANTHER" id="PTHR40062">
    <property type="entry name" value="GTP-SENSING TRANSCRIPTIONAL PLEIOTROPIC REPRESSOR CODY"/>
    <property type="match status" value="1"/>
</dbReference>
<dbReference type="Pfam" id="PF06018">
    <property type="entry name" value="CodY"/>
    <property type="match status" value="1"/>
</dbReference>
<dbReference type="Pfam" id="PF08222">
    <property type="entry name" value="HTH_CodY"/>
    <property type="match status" value="1"/>
</dbReference>
<dbReference type="PIRSF" id="PIRSF011572">
    <property type="entry name" value="GTP_sensing_CodY"/>
    <property type="match status" value="1"/>
</dbReference>
<dbReference type="SUPFAM" id="SSF46785">
    <property type="entry name" value="Winged helix' DNA-binding domain"/>
    <property type="match status" value="1"/>
</dbReference>
<gene>
    <name evidence="1" type="primary">codY</name>
    <name type="ordered locus">M6_Spy1505</name>
</gene>
<proteinExistence type="inferred from homology"/>
<sequence>MPNLLEKTRKITSILQRSVDSLETELPYNTMASRLADIIDCNACIINGGGTLLGYAMKYKTNTDRVEEFFEAKQFPDTYVKAASRVYDTEANLSVENELTIFPVESKDTYPGGLTTIAPIYGGGMRLGSLIIWRNDNEFSDDDLILVEISSTVVGIQLLNLQTENLEDTIRKQTAVNMAINTLSYSEMKAVAAILGELDGNEGRLTASVIADRIGITRSVIVNALRKLESAGIIESRSLGMKGTYLKVINEGIFAKLKEF</sequence>
<reference key="1">
    <citation type="journal article" date="2004" name="J. Infect. Dis.">
        <title>Progress toward characterization of the group A Streptococcus metagenome: complete genome sequence of a macrolide-resistant serotype M6 strain.</title>
        <authorList>
            <person name="Banks D.J."/>
            <person name="Porcella S.F."/>
            <person name="Barbian K.D."/>
            <person name="Beres S.B."/>
            <person name="Philips L.E."/>
            <person name="Voyich J.M."/>
            <person name="DeLeo F.R."/>
            <person name="Martin J.M."/>
            <person name="Somerville G.A."/>
            <person name="Musser J.M."/>
        </authorList>
    </citation>
    <scope>NUCLEOTIDE SEQUENCE [LARGE SCALE GENOMIC DNA]</scope>
    <source>
        <strain>ATCC BAA-946 / MGAS10394</strain>
    </source>
</reference>
<evidence type="ECO:0000255" key="1">
    <source>
        <dbReference type="HAMAP-Rule" id="MF_00621"/>
    </source>
</evidence>
<evidence type="ECO:0000305" key="2"/>
<organism>
    <name type="scientific">Streptococcus pyogenes serotype M6 (strain ATCC BAA-946 / MGAS10394)</name>
    <dbReference type="NCBI Taxonomy" id="286636"/>
    <lineage>
        <taxon>Bacteria</taxon>
        <taxon>Bacillati</taxon>
        <taxon>Bacillota</taxon>
        <taxon>Bacilli</taxon>
        <taxon>Lactobacillales</taxon>
        <taxon>Streptococcaceae</taxon>
        <taxon>Streptococcus</taxon>
    </lineage>
</organism>
<comment type="function">
    <text evidence="1">DNA-binding global transcriptional regulator which is involved in the adaptive response to starvation and acts by directly or indirectly controlling the expression of numerous genes in response to nutrient availability. During rapid exponential growth, CodY is highly active and represses genes whose products allow adaptation to nutrient depletion.</text>
</comment>
<comment type="subcellular location">
    <subcellularLocation>
        <location evidence="1">Cytoplasm</location>
    </subcellularLocation>
</comment>
<comment type="similarity">
    <text evidence="1">Belongs to the CodY family.</text>
</comment>
<comment type="sequence caution" evidence="2">
    <conflict type="erroneous initiation">
        <sequence resource="EMBL-CDS" id="AAT87640"/>
    </conflict>
</comment>
<accession>Q5XAC3</accession>
<name>CODY_STRP6</name>
<protein>
    <recommendedName>
        <fullName evidence="1">Global transcriptional regulator CodY</fullName>
    </recommendedName>
</protein>
<keyword id="KW-0963">Cytoplasm</keyword>
<keyword id="KW-0238">DNA-binding</keyword>
<keyword id="KW-0678">Repressor</keyword>
<keyword id="KW-0804">Transcription</keyword>
<keyword id="KW-0805">Transcription regulation</keyword>